<sequence>MESGTSRTSDTGGTGRAGSTETSGSGDIARTLELLWDTGRRPSRGPKPTLTLDRVVEAAVQIADAEGLEGLSMRRVAAELGTGTMSLYRYVPGKGELLDLMLDRVQRPSENPADLGDGGWRAALEAMARETLALYRRHPWLLQVNQSRPILGPSAMDGMEKVLTLIRPMGLTDPELVSAIIMIDGYVVGAARSQLYQQEAERRTGLTDAEFWRAQVPMLEKVLASGRYPVMASLSEDTFGPDFDHFGFGLQRILDGLEVLVAQRRGESAP</sequence>
<feature type="chain" id="PRO_0000461857" description="HTH-type transcriptional repressor DrrR1">
    <location>
        <begin position="1"/>
        <end position="270"/>
    </location>
</feature>
<feature type="domain" description="HTH tetR-type" evidence="1">
    <location>
        <begin position="49"/>
        <end position="109"/>
    </location>
</feature>
<feature type="DNA-binding region" description="H-T-H motif" evidence="1">
    <location>
        <begin position="72"/>
        <end position="91"/>
    </location>
</feature>
<feature type="region of interest" description="Disordered" evidence="2">
    <location>
        <begin position="1"/>
        <end position="28"/>
    </location>
</feature>
<feature type="compositionally biased region" description="Low complexity" evidence="2">
    <location>
        <begin position="1"/>
        <end position="11"/>
    </location>
</feature>
<gene>
    <name evidence="4" type="primary">drrR1</name>
    <name evidence="6" type="ORF">R5U08_16000</name>
</gene>
<proteinExistence type="evidence at protein level"/>
<protein>
    <recommendedName>
        <fullName evidence="5">HTH-type transcriptional repressor DrrR1</fullName>
    </recommendedName>
</protein>
<organism>
    <name type="scientific">Streptomyces coeruleorubidus</name>
    <dbReference type="NCBI Taxonomy" id="116188"/>
    <lineage>
        <taxon>Bacteria</taxon>
        <taxon>Bacillati</taxon>
        <taxon>Actinomycetota</taxon>
        <taxon>Actinomycetes</taxon>
        <taxon>Kitasatosporales</taxon>
        <taxon>Streptomycetaceae</taxon>
        <taxon>Streptomyces</taxon>
    </lineage>
</organism>
<comment type="function">
    <text evidence="3">Transcriptional regulator that modulates the expression of the drrA2-drrB2 genes, which encode an ABC transporter involved in daunorubicin efflux, in response to intracellular daunorubicin/doxorubicin accumulation (PubMed:39375957). In the absence of daunorubicin or doxorubicin, binds directly to the drrA2-drrB2 promoter region and negatively regulates expression of the genes (PubMed:39375957). In the presence of daunorubicin or doxorubicin, DrrR1 dissociates from DNA, leading to the transcription of the genes (PubMed:39375957).</text>
</comment>
<comment type="activity regulation">
    <text evidence="3">Daunorubicin and doxorubicin can induce dissociation of DrrR1 from its DNA complex (PubMed:39375957). Ampicillin cannot release DrrR1 from the DNA complex at the same concentrations (PubMed:39375957).</text>
</comment>
<comment type="subcellular location">
    <subcellularLocation>
        <location evidence="5">Cytoplasm</location>
    </subcellularLocation>
</comment>
<comment type="disruption phenotype">
    <text evidence="3">The transcriptional level of drrA2-drrB2 is significantly up-regulated in the drrR1 deletion mutant compared with that in the wild-type strain.</text>
</comment>
<name>DRRR1_STRC4</name>
<evidence type="ECO:0000255" key="1">
    <source>
        <dbReference type="PROSITE-ProRule" id="PRU00335"/>
    </source>
</evidence>
<evidence type="ECO:0000256" key="2">
    <source>
        <dbReference type="SAM" id="MobiDB-lite"/>
    </source>
</evidence>
<evidence type="ECO:0000269" key="3">
    <source>
    </source>
</evidence>
<evidence type="ECO:0000303" key="4">
    <source>
    </source>
</evidence>
<evidence type="ECO:0000305" key="5"/>
<evidence type="ECO:0000312" key="6">
    <source>
        <dbReference type="EMBL" id="WOT35542.1"/>
    </source>
</evidence>
<keyword id="KW-0963">Cytoplasm</keyword>
<keyword id="KW-0238">DNA-binding</keyword>
<keyword id="KW-0678">Repressor</keyword>
<keyword id="KW-0804">Transcription</keyword>
<keyword id="KW-0805">Transcription regulation</keyword>
<accession>P0DXY9</accession>
<dbReference type="EMBL" id="CP137524">
    <property type="protein sequence ID" value="WOT35542.1"/>
    <property type="molecule type" value="Genomic_DNA"/>
</dbReference>
<dbReference type="RefSeq" id="WP_193504931.1">
    <property type="nucleotide sequence ID" value="NZ_BMSO01000006.1"/>
</dbReference>
<dbReference type="GO" id="GO:0005737">
    <property type="term" value="C:cytoplasm"/>
    <property type="evidence" value="ECO:0007669"/>
    <property type="project" value="UniProtKB-SubCell"/>
</dbReference>
<dbReference type="GO" id="GO:0003700">
    <property type="term" value="F:DNA-binding transcription factor activity"/>
    <property type="evidence" value="ECO:0007669"/>
    <property type="project" value="TreeGrafter"/>
</dbReference>
<dbReference type="GO" id="GO:0000976">
    <property type="term" value="F:transcription cis-regulatory region binding"/>
    <property type="evidence" value="ECO:0007669"/>
    <property type="project" value="TreeGrafter"/>
</dbReference>
<dbReference type="GO" id="GO:0045892">
    <property type="term" value="P:negative regulation of DNA-templated transcription"/>
    <property type="evidence" value="ECO:0007669"/>
    <property type="project" value="InterPro"/>
</dbReference>
<dbReference type="Gene3D" id="1.10.10.60">
    <property type="entry name" value="Homeodomain-like"/>
    <property type="match status" value="1"/>
</dbReference>
<dbReference type="Gene3D" id="1.10.357.10">
    <property type="entry name" value="Tetracycline Repressor, domain 2"/>
    <property type="match status" value="1"/>
</dbReference>
<dbReference type="InterPro" id="IPR009057">
    <property type="entry name" value="Homeodomain-like_sf"/>
</dbReference>
<dbReference type="InterPro" id="IPR050109">
    <property type="entry name" value="HTH-type_TetR-like_transc_reg"/>
</dbReference>
<dbReference type="InterPro" id="IPR001647">
    <property type="entry name" value="HTH_TetR"/>
</dbReference>
<dbReference type="InterPro" id="IPR004111">
    <property type="entry name" value="Repressor_TetR_C"/>
</dbReference>
<dbReference type="InterPro" id="IPR036271">
    <property type="entry name" value="Tet_transcr_reg_TetR-rel_C_sf"/>
</dbReference>
<dbReference type="PANTHER" id="PTHR30055">
    <property type="entry name" value="HTH-TYPE TRANSCRIPTIONAL REGULATOR RUTR"/>
    <property type="match status" value="1"/>
</dbReference>
<dbReference type="PANTHER" id="PTHR30055:SF151">
    <property type="entry name" value="TRANSCRIPTIONAL REGULATORY PROTEIN"/>
    <property type="match status" value="1"/>
</dbReference>
<dbReference type="Pfam" id="PF02909">
    <property type="entry name" value="TetR_C_1"/>
    <property type="match status" value="1"/>
</dbReference>
<dbReference type="Pfam" id="PF00440">
    <property type="entry name" value="TetR_N"/>
    <property type="match status" value="1"/>
</dbReference>
<dbReference type="SUPFAM" id="SSF46689">
    <property type="entry name" value="Homeodomain-like"/>
    <property type="match status" value="1"/>
</dbReference>
<dbReference type="SUPFAM" id="SSF48498">
    <property type="entry name" value="Tetracyclin repressor-like, C-terminal domain"/>
    <property type="match status" value="1"/>
</dbReference>
<dbReference type="PROSITE" id="PS50977">
    <property type="entry name" value="HTH_TETR_2"/>
    <property type="match status" value="1"/>
</dbReference>
<reference key="1">
    <citation type="submission" date="2023-10" db="EMBL/GenBank/DDBJ databases">
        <authorList>
            <person name="Guan W."/>
        </authorList>
    </citation>
    <scope>NUCLEOTIDE SEQUENCE [LARGE SCALE GENOMIC DNA]</scope>
    <source>
        <strain>CICC 11043</strain>
    </source>
</reference>
<reference key="2">
    <citation type="journal article" date="2024" name="Microb. Biotechnol.">
        <title>The involvement of multiple ABC transporters in daunorubicin efflux in Streptomyces coeruleorubidus.</title>
        <authorList>
            <person name="Dong J."/>
            <person name="Ning J."/>
            <person name="Tian Y."/>
            <person name="Li H."/>
            <person name="Chen H."/>
            <person name="Guan W."/>
        </authorList>
    </citation>
    <scope>FUNCTION</scope>
    <scope>DNA-BINDING</scope>
    <scope>ACTIVITY REGULATION</scope>
    <scope>DISRUPTION PHENOTYPE</scope>
</reference>